<protein>
    <recommendedName>
        <fullName evidence="1">Probable cytosol aminopeptidase</fullName>
        <ecNumber evidence="1">3.4.11.1</ecNumber>
    </recommendedName>
    <alternativeName>
        <fullName evidence="1">Leucine aminopeptidase</fullName>
        <shortName evidence="1">LAP</shortName>
        <ecNumber evidence="1">3.4.11.10</ecNumber>
    </alternativeName>
    <alternativeName>
        <fullName evidence="1">Leucyl aminopeptidase</fullName>
    </alternativeName>
</protein>
<proteinExistence type="inferred from homology"/>
<feature type="chain" id="PRO_1000077273" description="Probable cytosol aminopeptidase">
    <location>
        <begin position="1"/>
        <end position="493"/>
    </location>
</feature>
<feature type="active site" evidence="1">
    <location>
        <position position="271"/>
    </location>
</feature>
<feature type="active site" evidence="1">
    <location>
        <position position="345"/>
    </location>
</feature>
<feature type="binding site" evidence="1">
    <location>
        <position position="259"/>
    </location>
    <ligand>
        <name>Mn(2+)</name>
        <dbReference type="ChEBI" id="CHEBI:29035"/>
        <label>2</label>
    </ligand>
</feature>
<feature type="binding site" evidence="1">
    <location>
        <position position="264"/>
    </location>
    <ligand>
        <name>Mn(2+)</name>
        <dbReference type="ChEBI" id="CHEBI:29035"/>
        <label>1</label>
    </ligand>
</feature>
<feature type="binding site" evidence="1">
    <location>
        <position position="264"/>
    </location>
    <ligand>
        <name>Mn(2+)</name>
        <dbReference type="ChEBI" id="CHEBI:29035"/>
        <label>2</label>
    </ligand>
</feature>
<feature type="binding site" evidence="1">
    <location>
        <position position="282"/>
    </location>
    <ligand>
        <name>Mn(2+)</name>
        <dbReference type="ChEBI" id="CHEBI:29035"/>
        <label>2</label>
    </ligand>
</feature>
<feature type="binding site" evidence="1">
    <location>
        <position position="341"/>
    </location>
    <ligand>
        <name>Mn(2+)</name>
        <dbReference type="ChEBI" id="CHEBI:29035"/>
        <label>1</label>
    </ligand>
</feature>
<feature type="binding site" evidence="1">
    <location>
        <position position="343"/>
    </location>
    <ligand>
        <name>Mn(2+)</name>
        <dbReference type="ChEBI" id="CHEBI:29035"/>
        <label>1</label>
    </ligand>
</feature>
<feature type="binding site" evidence="1">
    <location>
        <position position="343"/>
    </location>
    <ligand>
        <name>Mn(2+)</name>
        <dbReference type="ChEBI" id="CHEBI:29035"/>
        <label>2</label>
    </ligand>
</feature>
<sequence length="493" mass="53721">MFQVQTELANHGAVIVALFEEETSRFVQELDKAFEGQLQGLLDEKELSTKKKSISKVHSLGKTNVKRYYFVGLGKKEAYTTETLRASLSKTFKTLQAEKIQDAAILLDSFVTEKLDAIDVAHIAAEVYCLGTYRLQTYKTDKKEHVELEKLVVITAEDAKEIEAALTVGYVHGRATNSARTLVNMPPNMLTATKLAEYAVELAEKYDMDYKVLEKEEMEELGMGALLAVNQGSTEPPKMIALIYKGKEEWKDVIGLIGKGITYDTGGYSLKPRDGMVGMKGDMGGAAAVLGAMEIIGELRPEQNVIAIIPSTDNVVSGTAFKPDDVITSMSGKTIEVLNTDAEGRLALADGITYAKKLGANYLVDVATLTGGVIVALGNHTTGAMTNNETLFEQVLEASMETDERIWQLPIFERDKERVRNSKFADLNNSPGRDGHAVMAGTFLGEFAEDTPWVHLDIAGTSDTTSTHDLGPAGATGVMVRTLATLVERFGEE</sequence>
<organism>
    <name type="scientific">Bacillus cytotoxicus (strain DSM 22905 / CIP 110041 / 391-98 / NVH 391-98)</name>
    <dbReference type="NCBI Taxonomy" id="315749"/>
    <lineage>
        <taxon>Bacteria</taxon>
        <taxon>Bacillati</taxon>
        <taxon>Bacillota</taxon>
        <taxon>Bacilli</taxon>
        <taxon>Bacillales</taxon>
        <taxon>Bacillaceae</taxon>
        <taxon>Bacillus</taxon>
        <taxon>Bacillus cereus group</taxon>
    </lineage>
</organism>
<gene>
    <name evidence="1" type="primary">pepA</name>
    <name type="ordered locus">Bcer98_3532</name>
</gene>
<evidence type="ECO:0000255" key="1">
    <source>
        <dbReference type="HAMAP-Rule" id="MF_00181"/>
    </source>
</evidence>
<accession>A7GUC8</accession>
<name>AMPA_BACCN</name>
<dbReference type="EC" id="3.4.11.1" evidence="1"/>
<dbReference type="EC" id="3.4.11.10" evidence="1"/>
<dbReference type="EMBL" id="CP000764">
    <property type="protein sequence ID" value="ABS23736.1"/>
    <property type="molecule type" value="Genomic_DNA"/>
</dbReference>
<dbReference type="RefSeq" id="WP_012095986.1">
    <property type="nucleotide sequence ID" value="NC_009674.1"/>
</dbReference>
<dbReference type="SMR" id="A7GUC8"/>
<dbReference type="STRING" id="315749.Bcer98_3532"/>
<dbReference type="MEROPS" id="M17.010"/>
<dbReference type="GeneID" id="33898787"/>
<dbReference type="KEGG" id="bcy:Bcer98_3532"/>
<dbReference type="eggNOG" id="COG0260">
    <property type="taxonomic scope" value="Bacteria"/>
</dbReference>
<dbReference type="HOGENOM" id="CLU_013734_6_0_9"/>
<dbReference type="OrthoDB" id="9809354at2"/>
<dbReference type="Proteomes" id="UP000002300">
    <property type="component" value="Chromosome"/>
</dbReference>
<dbReference type="GO" id="GO:0005737">
    <property type="term" value="C:cytoplasm"/>
    <property type="evidence" value="ECO:0007669"/>
    <property type="project" value="UniProtKB-SubCell"/>
</dbReference>
<dbReference type="GO" id="GO:0030145">
    <property type="term" value="F:manganese ion binding"/>
    <property type="evidence" value="ECO:0007669"/>
    <property type="project" value="UniProtKB-UniRule"/>
</dbReference>
<dbReference type="GO" id="GO:0070006">
    <property type="term" value="F:metalloaminopeptidase activity"/>
    <property type="evidence" value="ECO:0007669"/>
    <property type="project" value="InterPro"/>
</dbReference>
<dbReference type="GO" id="GO:0006508">
    <property type="term" value="P:proteolysis"/>
    <property type="evidence" value="ECO:0007669"/>
    <property type="project" value="UniProtKB-KW"/>
</dbReference>
<dbReference type="CDD" id="cd00433">
    <property type="entry name" value="Peptidase_M17"/>
    <property type="match status" value="1"/>
</dbReference>
<dbReference type="Gene3D" id="3.40.220.10">
    <property type="entry name" value="Leucine Aminopeptidase, subunit E, domain 1"/>
    <property type="match status" value="1"/>
</dbReference>
<dbReference type="Gene3D" id="3.40.630.10">
    <property type="entry name" value="Zn peptidases"/>
    <property type="match status" value="1"/>
</dbReference>
<dbReference type="HAMAP" id="MF_00181">
    <property type="entry name" value="Cytosol_peptidase_M17"/>
    <property type="match status" value="1"/>
</dbReference>
<dbReference type="InterPro" id="IPR011356">
    <property type="entry name" value="Leucine_aapep/pepB"/>
</dbReference>
<dbReference type="InterPro" id="IPR043472">
    <property type="entry name" value="Macro_dom-like"/>
</dbReference>
<dbReference type="InterPro" id="IPR000819">
    <property type="entry name" value="Peptidase_M17_C"/>
</dbReference>
<dbReference type="InterPro" id="IPR023042">
    <property type="entry name" value="Peptidase_M17_leu_NH2_pept"/>
</dbReference>
<dbReference type="InterPro" id="IPR008283">
    <property type="entry name" value="Peptidase_M17_N"/>
</dbReference>
<dbReference type="NCBIfam" id="NF002073">
    <property type="entry name" value="PRK00913.1-2"/>
    <property type="match status" value="1"/>
</dbReference>
<dbReference type="NCBIfam" id="NF002074">
    <property type="entry name" value="PRK00913.1-4"/>
    <property type="match status" value="1"/>
</dbReference>
<dbReference type="NCBIfam" id="NF002083">
    <property type="entry name" value="PRK00913.3-5"/>
    <property type="match status" value="1"/>
</dbReference>
<dbReference type="PANTHER" id="PTHR11963:SF23">
    <property type="entry name" value="CYTOSOL AMINOPEPTIDASE"/>
    <property type="match status" value="1"/>
</dbReference>
<dbReference type="PANTHER" id="PTHR11963">
    <property type="entry name" value="LEUCINE AMINOPEPTIDASE-RELATED"/>
    <property type="match status" value="1"/>
</dbReference>
<dbReference type="Pfam" id="PF00883">
    <property type="entry name" value="Peptidase_M17"/>
    <property type="match status" value="1"/>
</dbReference>
<dbReference type="Pfam" id="PF02789">
    <property type="entry name" value="Peptidase_M17_N"/>
    <property type="match status" value="1"/>
</dbReference>
<dbReference type="PRINTS" id="PR00481">
    <property type="entry name" value="LAMNOPPTDASE"/>
</dbReference>
<dbReference type="SUPFAM" id="SSF52949">
    <property type="entry name" value="Macro domain-like"/>
    <property type="match status" value="1"/>
</dbReference>
<dbReference type="SUPFAM" id="SSF53187">
    <property type="entry name" value="Zn-dependent exopeptidases"/>
    <property type="match status" value="1"/>
</dbReference>
<dbReference type="PROSITE" id="PS00631">
    <property type="entry name" value="CYTOSOL_AP"/>
    <property type="match status" value="1"/>
</dbReference>
<comment type="function">
    <text evidence="1">Presumably involved in the processing and regular turnover of intracellular proteins. Catalyzes the removal of unsubstituted N-terminal amino acids from various peptides.</text>
</comment>
<comment type="catalytic activity">
    <reaction evidence="1">
        <text>Release of an N-terminal amino acid, Xaa-|-Yaa-, in which Xaa is preferably Leu, but may be other amino acids including Pro although not Arg or Lys, and Yaa may be Pro. Amino acid amides and methyl esters are also readily hydrolyzed, but rates on arylamides are exceedingly low.</text>
        <dbReference type="EC" id="3.4.11.1"/>
    </reaction>
</comment>
<comment type="catalytic activity">
    <reaction evidence="1">
        <text>Release of an N-terminal amino acid, preferentially leucine, but not glutamic or aspartic acids.</text>
        <dbReference type="EC" id="3.4.11.10"/>
    </reaction>
</comment>
<comment type="cofactor">
    <cofactor evidence="1">
        <name>Mn(2+)</name>
        <dbReference type="ChEBI" id="CHEBI:29035"/>
    </cofactor>
    <text evidence="1">Binds 2 manganese ions per subunit.</text>
</comment>
<comment type="subcellular location">
    <subcellularLocation>
        <location evidence="1">Cytoplasm</location>
    </subcellularLocation>
</comment>
<comment type="similarity">
    <text evidence="1">Belongs to the peptidase M17 family.</text>
</comment>
<reference key="1">
    <citation type="journal article" date="2008" name="Chem. Biol. Interact.">
        <title>Extending the Bacillus cereus group genomics to putative food-borne pathogens of different toxicity.</title>
        <authorList>
            <person name="Lapidus A."/>
            <person name="Goltsman E."/>
            <person name="Auger S."/>
            <person name="Galleron N."/>
            <person name="Segurens B."/>
            <person name="Dossat C."/>
            <person name="Land M.L."/>
            <person name="Broussolle V."/>
            <person name="Brillard J."/>
            <person name="Guinebretiere M.-H."/>
            <person name="Sanchis V."/>
            <person name="Nguen-the C."/>
            <person name="Lereclus D."/>
            <person name="Richardson P."/>
            <person name="Wincker P."/>
            <person name="Weissenbach J."/>
            <person name="Ehrlich S.D."/>
            <person name="Sorokin A."/>
        </authorList>
    </citation>
    <scope>NUCLEOTIDE SEQUENCE [LARGE SCALE GENOMIC DNA]</scope>
    <source>
        <strain>DSM 22905 / CIP 110041 / 391-98 / NVH 391-98</strain>
    </source>
</reference>
<keyword id="KW-0031">Aminopeptidase</keyword>
<keyword id="KW-0963">Cytoplasm</keyword>
<keyword id="KW-0378">Hydrolase</keyword>
<keyword id="KW-0464">Manganese</keyword>
<keyword id="KW-0479">Metal-binding</keyword>
<keyword id="KW-0645">Protease</keyword>